<protein>
    <recommendedName>
        <fullName>Protein MxiI</fullName>
    </recommendedName>
</protein>
<gene>
    <name type="primary">mxiI</name>
    <name type="ordered locus">CP0138</name>
</gene>
<geneLocation type="plasmid">
    <name>pWR100</name>
</geneLocation>
<geneLocation type="plasmid">
    <name>pWR501</name>
</geneLocation>
<geneLocation type="plasmid">
    <name>pCP301</name>
</geneLocation>
<feature type="chain" id="PRO_0000096661" description="Protein MxiI">
    <location>
        <begin position="1"/>
        <end position="97"/>
    </location>
</feature>
<proteinExistence type="evidence at protein level"/>
<name>MXII_SHIFL</name>
<evidence type="ECO:0000305" key="1"/>
<comment type="function">
    <text>Necessary for the secretion of IPA invasins.</text>
</comment>
<comment type="similarity">
    <text evidence="1">To S.typhimurium PrgJ.</text>
</comment>
<dbReference type="EMBL" id="M98390">
    <property type="protein sequence ID" value="AAA26531.1"/>
    <property type="molecule type" value="Genomic_DNA"/>
</dbReference>
<dbReference type="EMBL" id="AL391753">
    <property type="protein sequence ID" value="CAC05813.1"/>
    <property type="molecule type" value="Genomic_DNA"/>
</dbReference>
<dbReference type="EMBL" id="AF348706">
    <property type="protein sequence ID" value="AAK18457.1"/>
    <property type="molecule type" value="Genomic_DNA"/>
</dbReference>
<dbReference type="EMBL" id="AF386526">
    <property type="protein sequence ID" value="AAL72554.1"/>
    <property type="molecule type" value="Genomic_DNA"/>
</dbReference>
<dbReference type="PIR" id="B45271">
    <property type="entry name" value="B45271"/>
</dbReference>
<dbReference type="RefSeq" id="NP_085301.1">
    <property type="nucleotide sequence ID" value="NC_002698.1"/>
</dbReference>
<dbReference type="RefSeq" id="NP_858271.1">
    <property type="nucleotide sequence ID" value="NC_004851.1"/>
</dbReference>
<dbReference type="RefSeq" id="WP_001106823.1">
    <property type="nucleotide sequence ID" value="NZ_WPGW01000400.1"/>
</dbReference>
<dbReference type="RefSeq" id="YP_009062495.1">
    <property type="nucleotide sequence ID" value="NC_024996.1"/>
</dbReference>
<dbReference type="PDB" id="8AXK">
    <property type="method" value="EM"/>
    <property type="resolution" value="4.05 A"/>
    <property type="chains" value="M/N/O/P/Q/R=1-97"/>
</dbReference>
<dbReference type="PDBsum" id="8AXK"/>
<dbReference type="EMDB" id="EMD-15700"/>
<dbReference type="SMR" id="P0A225"/>
<dbReference type="PaxDb" id="198214-CP0138"/>
<dbReference type="GeneID" id="1238257"/>
<dbReference type="KEGG" id="sfl:CP0138"/>
<dbReference type="HOGENOM" id="CLU_2345107_0_0_6"/>
<dbReference type="Proteomes" id="UP000001006">
    <property type="component" value="Plasmid pCP301"/>
</dbReference>
<dbReference type="GO" id="GO:0015031">
    <property type="term" value="P:protein transport"/>
    <property type="evidence" value="ECO:0007669"/>
    <property type="project" value="UniProtKB-KW"/>
</dbReference>
<dbReference type="InterPro" id="IPR047754">
    <property type="entry name" value="T3SS_SctI-like"/>
</dbReference>
<dbReference type="NCBIfam" id="NF038054">
    <property type="entry name" value="T3SS_SctI"/>
    <property type="match status" value="1"/>
</dbReference>
<reference key="1">
    <citation type="journal article" date="1992" name="J. Bacteriol.">
        <title>MxiJ, a lipoprotein involved in secretion of Shigella Ipa invasins, is homologous to YscJ, a secretion factor of the Yersinia Yop proteins.</title>
        <authorList>
            <person name="Allaoui A."/>
            <person name="Sansonetti P.J."/>
            <person name="Parsot C."/>
        </authorList>
    </citation>
    <scope>NUCLEOTIDE SEQUENCE [GENOMIC DNA]</scope>
    <source>
        <strain>M90T / Serotype 5a</strain>
        <plasmid>pWR100</plasmid>
    </source>
</reference>
<reference key="2">
    <citation type="journal article" date="2000" name="Mol. Microbiol.">
        <title>The virulence plasmid pWR100 and the repertoire of proteins secreted by the type III secretion apparatus of Shigella flexneri.</title>
        <authorList>
            <person name="Buchrieser C."/>
            <person name="Glaser P."/>
            <person name="Rusniok C."/>
            <person name="Nedjari H."/>
            <person name="d'Hauteville H."/>
            <person name="Kunst F."/>
            <person name="Sansonetti P.J."/>
            <person name="Parsot C."/>
        </authorList>
    </citation>
    <scope>NUCLEOTIDE SEQUENCE [GENOMIC DNA]</scope>
    <source>
        <strain>M90T / Serotype 5a</strain>
        <plasmid>pWR100</plasmid>
    </source>
</reference>
<reference key="3">
    <citation type="journal article" date="2001" name="Infect. Immun.">
        <title>Complete DNA sequence and analysis of the large virulence plasmid of Shigella flexneri.</title>
        <authorList>
            <person name="Venkatesan M.M."/>
            <person name="Goldberg M.B."/>
            <person name="Rose D.J."/>
            <person name="Grotbeck E.J."/>
            <person name="Burland V."/>
            <person name="Blattner F.R."/>
        </authorList>
    </citation>
    <scope>NUCLEOTIDE SEQUENCE [GENOMIC DNA]</scope>
    <source>
        <strain>M90T / Serotype 5a</strain>
        <plasmid>pWR501</plasmid>
    </source>
</reference>
<reference key="4">
    <citation type="journal article" date="2002" name="Nucleic Acids Res.">
        <title>Genome sequence of Shigella flexneri 2a: insights into pathogenicity through comparison with genomes of Escherichia coli K12 and O157.</title>
        <authorList>
            <person name="Jin Q."/>
            <person name="Yuan Z."/>
            <person name="Xu J."/>
            <person name="Wang Y."/>
            <person name="Shen Y."/>
            <person name="Lu W."/>
            <person name="Wang J."/>
            <person name="Liu H."/>
            <person name="Yang J."/>
            <person name="Yang F."/>
            <person name="Zhang X."/>
            <person name="Zhang J."/>
            <person name="Yang G."/>
            <person name="Wu H."/>
            <person name="Qu D."/>
            <person name="Dong J."/>
            <person name="Sun L."/>
            <person name="Xue Y."/>
            <person name="Zhao A."/>
            <person name="Gao Y."/>
            <person name="Zhu J."/>
            <person name="Kan B."/>
            <person name="Ding K."/>
            <person name="Chen S."/>
            <person name="Cheng H."/>
            <person name="Yao Z."/>
            <person name="He B."/>
            <person name="Chen R."/>
            <person name="Ma D."/>
            <person name="Qiang B."/>
            <person name="Wen Y."/>
            <person name="Hou Y."/>
            <person name="Yu J."/>
        </authorList>
    </citation>
    <scope>NUCLEOTIDE SEQUENCE [LARGE SCALE GENOMIC DNA]</scope>
    <source>
        <strain>301 / Serotype 2a</strain>
        <plasmid>pCP301</plasmid>
    </source>
</reference>
<keyword id="KW-0002">3D-structure</keyword>
<keyword id="KW-0614">Plasmid</keyword>
<keyword id="KW-0653">Protein transport</keyword>
<keyword id="KW-1185">Reference proteome</keyword>
<keyword id="KW-0813">Transport</keyword>
<keyword id="KW-0843">Virulence</keyword>
<sequence>MNYIYPVNQVDIIKASDFQSQEISSLEDVVSAKYSDIKMDTDIQVSQIMEMVSNPESLNPESLAKLQTTLSNYSIGVSLAGTLARKTVSAVETLLKS</sequence>
<accession>P0A225</accession>
<accession>Q06080</accession>
<organism>
    <name type="scientific">Shigella flexneri</name>
    <dbReference type="NCBI Taxonomy" id="623"/>
    <lineage>
        <taxon>Bacteria</taxon>
        <taxon>Pseudomonadati</taxon>
        <taxon>Pseudomonadota</taxon>
        <taxon>Gammaproteobacteria</taxon>
        <taxon>Enterobacterales</taxon>
        <taxon>Enterobacteriaceae</taxon>
        <taxon>Shigella</taxon>
    </lineage>
</organism>